<reference key="1">
    <citation type="submission" date="2009-07" db="EMBL/GenBank/DDBJ databases">
        <title>Complete sequence of Geobacter sp. M21.</title>
        <authorList>
            <consortium name="US DOE Joint Genome Institute"/>
            <person name="Lucas S."/>
            <person name="Copeland A."/>
            <person name="Lapidus A."/>
            <person name="Glavina del Rio T."/>
            <person name="Dalin E."/>
            <person name="Tice H."/>
            <person name="Bruce D."/>
            <person name="Goodwin L."/>
            <person name="Pitluck S."/>
            <person name="Saunders E."/>
            <person name="Brettin T."/>
            <person name="Detter J.C."/>
            <person name="Han C."/>
            <person name="Larimer F."/>
            <person name="Land M."/>
            <person name="Hauser L."/>
            <person name="Kyrpides N."/>
            <person name="Ovchinnikova G."/>
            <person name="Lovley D."/>
        </authorList>
    </citation>
    <scope>NUCLEOTIDE SEQUENCE [LARGE SCALE GENOMIC DNA]</scope>
    <source>
        <strain>M21</strain>
    </source>
</reference>
<organism>
    <name type="scientific">Geobacter sp. (strain M21)</name>
    <dbReference type="NCBI Taxonomy" id="443144"/>
    <lineage>
        <taxon>Bacteria</taxon>
        <taxon>Pseudomonadati</taxon>
        <taxon>Thermodesulfobacteriota</taxon>
        <taxon>Desulfuromonadia</taxon>
        <taxon>Geobacterales</taxon>
        <taxon>Geobacteraceae</taxon>
        <taxon>Geobacter</taxon>
    </lineage>
</organism>
<evidence type="ECO:0000255" key="1">
    <source>
        <dbReference type="HAMAP-Rule" id="MF_01219"/>
    </source>
</evidence>
<accession>C6DZ53</accession>
<comment type="function">
    <text evidence="1">Regulates the transcription of the pyrimidine nucleotide (pyr) operon in response to exogenous pyrimidines.</text>
</comment>
<comment type="function">
    <text evidence="1">Also displays a weak uracil phosphoribosyltransferase activity which is not physiologically significant.</text>
</comment>
<comment type="catalytic activity">
    <reaction evidence="1">
        <text>UMP + diphosphate = 5-phospho-alpha-D-ribose 1-diphosphate + uracil</text>
        <dbReference type="Rhea" id="RHEA:13017"/>
        <dbReference type="ChEBI" id="CHEBI:17568"/>
        <dbReference type="ChEBI" id="CHEBI:33019"/>
        <dbReference type="ChEBI" id="CHEBI:57865"/>
        <dbReference type="ChEBI" id="CHEBI:58017"/>
        <dbReference type="EC" id="2.4.2.9"/>
    </reaction>
</comment>
<comment type="similarity">
    <text evidence="1">Belongs to the purine/pyrimidine phosphoribosyltransferase family. PyrR subfamily.</text>
</comment>
<gene>
    <name evidence="1" type="primary">pyrR</name>
    <name type="ordered locus">GM21_2313</name>
</gene>
<feature type="chain" id="PRO_1000213950" description="Bifunctional protein PyrR">
    <location>
        <begin position="1"/>
        <end position="177"/>
    </location>
</feature>
<feature type="short sequence motif" description="PRPP-binding" evidence="1">
    <location>
        <begin position="99"/>
        <end position="111"/>
    </location>
</feature>
<dbReference type="EC" id="2.4.2.9" evidence="1"/>
<dbReference type="EMBL" id="CP001661">
    <property type="protein sequence ID" value="ACT18361.1"/>
    <property type="molecule type" value="Genomic_DNA"/>
</dbReference>
<dbReference type="SMR" id="C6DZ53"/>
<dbReference type="STRING" id="443144.GM21_2313"/>
<dbReference type="KEGG" id="gem:GM21_2313"/>
<dbReference type="eggNOG" id="COG2065">
    <property type="taxonomic scope" value="Bacteria"/>
</dbReference>
<dbReference type="HOGENOM" id="CLU_094234_2_1_7"/>
<dbReference type="OrthoDB" id="9802227at2"/>
<dbReference type="GO" id="GO:0004845">
    <property type="term" value="F:uracil phosphoribosyltransferase activity"/>
    <property type="evidence" value="ECO:0007669"/>
    <property type="project" value="UniProtKB-UniRule"/>
</dbReference>
<dbReference type="GO" id="GO:0006355">
    <property type="term" value="P:regulation of DNA-templated transcription"/>
    <property type="evidence" value="ECO:0007669"/>
    <property type="project" value="UniProtKB-UniRule"/>
</dbReference>
<dbReference type="CDD" id="cd06223">
    <property type="entry name" value="PRTases_typeI"/>
    <property type="match status" value="1"/>
</dbReference>
<dbReference type="FunFam" id="3.40.50.2020:FF:000020">
    <property type="entry name" value="Bifunctional protein PyrR"/>
    <property type="match status" value="1"/>
</dbReference>
<dbReference type="Gene3D" id="3.40.50.2020">
    <property type="match status" value="1"/>
</dbReference>
<dbReference type="HAMAP" id="MF_01219">
    <property type="entry name" value="PyrR"/>
    <property type="match status" value="1"/>
</dbReference>
<dbReference type="InterPro" id="IPR000836">
    <property type="entry name" value="PRibTrfase_dom"/>
</dbReference>
<dbReference type="InterPro" id="IPR029057">
    <property type="entry name" value="PRTase-like"/>
</dbReference>
<dbReference type="InterPro" id="IPR023050">
    <property type="entry name" value="PyrR"/>
</dbReference>
<dbReference type="InterPro" id="IPR050137">
    <property type="entry name" value="PyrR_bifunctional"/>
</dbReference>
<dbReference type="NCBIfam" id="NF003545">
    <property type="entry name" value="PRK05205.1-1"/>
    <property type="match status" value="1"/>
</dbReference>
<dbReference type="NCBIfam" id="NF003548">
    <property type="entry name" value="PRK05205.1-4"/>
    <property type="match status" value="1"/>
</dbReference>
<dbReference type="NCBIfam" id="NF003549">
    <property type="entry name" value="PRK05205.1-5"/>
    <property type="match status" value="1"/>
</dbReference>
<dbReference type="PANTHER" id="PTHR11608">
    <property type="entry name" value="BIFUNCTIONAL PROTEIN PYRR"/>
    <property type="match status" value="1"/>
</dbReference>
<dbReference type="PANTHER" id="PTHR11608:SF0">
    <property type="entry name" value="BIFUNCTIONAL PROTEIN PYRR"/>
    <property type="match status" value="1"/>
</dbReference>
<dbReference type="Pfam" id="PF00156">
    <property type="entry name" value="Pribosyltran"/>
    <property type="match status" value="1"/>
</dbReference>
<dbReference type="SUPFAM" id="SSF53271">
    <property type="entry name" value="PRTase-like"/>
    <property type="match status" value="1"/>
</dbReference>
<sequence>MADNTVILDGSGVKRALTRIAHEVLEKNKGVEGLVLVGIRTGGVFLAQELAERLVEIEGVEVPCGAVDITMYRDDIKGHTEHLPVGKTELPFSIEGKKVVLVDDVLFTGRTIRAALDALMDQGRPSSIQLAVLVDRGHRDLPIRADFVGRNVPTSRSENIVVAFDADNKPTEVILQK</sequence>
<name>PYRR_GEOSM</name>
<keyword id="KW-0328">Glycosyltransferase</keyword>
<keyword id="KW-0804">Transcription</keyword>
<keyword id="KW-0805">Transcription regulation</keyword>
<keyword id="KW-0808">Transferase</keyword>
<proteinExistence type="inferred from homology"/>
<protein>
    <recommendedName>
        <fullName evidence="1">Bifunctional protein PyrR</fullName>
    </recommendedName>
    <domain>
        <recommendedName>
            <fullName evidence="1">Pyrimidine operon regulatory protein</fullName>
        </recommendedName>
    </domain>
    <domain>
        <recommendedName>
            <fullName evidence="1">Uracil phosphoribosyltransferase</fullName>
            <shortName evidence="1">UPRTase</shortName>
            <ecNumber evidence="1">2.4.2.9</ecNumber>
        </recommendedName>
    </domain>
</protein>